<reference key="1">
    <citation type="submission" date="2008-10" db="EMBL/GenBank/DDBJ databases">
        <title>Genome sequence of Bacillus cereus AH820.</title>
        <authorList>
            <person name="Dodson R.J."/>
            <person name="Durkin A.S."/>
            <person name="Rosovitz M.J."/>
            <person name="Rasko D.A."/>
            <person name="Hoffmaster A."/>
            <person name="Ravel J."/>
            <person name="Sutton G."/>
        </authorList>
    </citation>
    <scope>NUCLEOTIDE SEQUENCE [LARGE SCALE GENOMIC DNA]</scope>
    <source>
        <strain>AH820</strain>
    </source>
</reference>
<evidence type="ECO:0000255" key="1">
    <source>
        <dbReference type="HAMAP-Rule" id="MF_01851"/>
    </source>
</evidence>
<sequence length="208" mass="24034">MTLQTFKSTDFEVFTVDGLEERMSAIKTNIHPKLEALGEQFAAYLSKQTDENFFYHVAKHARRKVNPPNDTWVAFSTNKRGYKMLPHFQIGLWGTHAFIYFGLIYECPQKVETAHAFLEHLNDLKTNIPNDFVWSIDHTKPSVKLHKTLETEDLQKMIERLATVKKAELLVGIHISPEEFSAMTNEQFLAKIESTMQSLLPLYALCNR</sequence>
<protein>
    <recommendedName>
        <fullName evidence="1">UPF0637 protein BCAH820_3975</fullName>
    </recommendedName>
</protein>
<comment type="similarity">
    <text evidence="1">Belongs to the UPF0637 family.</text>
</comment>
<name>Y3975_BACC0</name>
<accession>B7JKT4</accession>
<dbReference type="EMBL" id="CP001283">
    <property type="protein sequence ID" value="ACK90104.1"/>
    <property type="molecule type" value="Genomic_DNA"/>
</dbReference>
<dbReference type="RefSeq" id="WP_000175083.1">
    <property type="nucleotide sequence ID" value="NC_011773.1"/>
</dbReference>
<dbReference type="SMR" id="B7JKT4"/>
<dbReference type="KEGG" id="bcu:BCAH820_3975"/>
<dbReference type="HOGENOM" id="CLU_096059_0_0_9"/>
<dbReference type="Proteomes" id="UP000001363">
    <property type="component" value="Chromosome"/>
</dbReference>
<dbReference type="Gene3D" id="3.30.930.20">
    <property type="entry name" value="Protein of unknown function DUF1054"/>
    <property type="match status" value="1"/>
</dbReference>
<dbReference type="HAMAP" id="MF_01851">
    <property type="entry name" value="UPF0637"/>
    <property type="match status" value="1"/>
</dbReference>
<dbReference type="InterPro" id="IPR009403">
    <property type="entry name" value="UPF0637"/>
</dbReference>
<dbReference type="InterPro" id="IPR053707">
    <property type="entry name" value="UPF0637_domain_sf"/>
</dbReference>
<dbReference type="Pfam" id="PF06335">
    <property type="entry name" value="DUF1054"/>
    <property type="match status" value="1"/>
</dbReference>
<dbReference type="PIRSF" id="PIRSF021332">
    <property type="entry name" value="DUF1054"/>
    <property type="match status" value="1"/>
</dbReference>
<dbReference type="SUPFAM" id="SSF142913">
    <property type="entry name" value="YktB/PF0168-like"/>
    <property type="match status" value="1"/>
</dbReference>
<proteinExistence type="inferred from homology"/>
<organism>
    <name type="scientific">Bacillus cereus (strain AH820)</name>
    <dbReference type="NCBI Taxonomy" id="405535"/>
    <lineage>
        <taxon>Bacteria</taxon>
        <taxon>Bacillati</taxon>
        <taxon>Bacillota</taxon>
        <taxon>Bacilli</taxon>
        <taxon>Bacillales</taxon>
        <taxon>Bacillaceae</taxon>
        <taxon>Bacillus</taxon>
        <taxon>Bacillus cereus group</taxon>
    </lineage>
</organism>
<gene>
    <name type="ordered locus">BCAH820_3975</name>
</gene>
<feature type="chain" id="PRO_1000188667" description="UPF0637 protein BCAH820_3975">
    <location>
        <begin position="1"/>
        <end position="208"/>
    </location>
</feature>